<feature type="chain" id="PRO_0000072676" description="B-lymphocyte antigen CD19">
    <location>
        <begin position="1" status="less than"/>
        <end position="430"/>
    </location>
</feature>
<feature type="topological domain" description="Extracellular" evidence="3">
    <location>
        <begin position="1" status="less than"/>
        <end position="168"/>
    </location>
</feature>
<feature type="transmembrane region" description="Helical" evidence="3">
    <location>
        <begin position="169"/>
        <end position="190"/>
    </location>
</feature>
<feature type="topological domain" description="Cytoplasmic" evidence="3">
    <location>
        <begin position="191"/>
        <end position="430"/>
    </location>
</feature>
<feature type="domain" description="Ig-like C2-type 1">
    <location>
        <begin position="1" status="less than"/>
        <end position="17"/>
    </location>
</feature>
<feature type="domain" description="Ig-like C2-type 2">
    <location>
        <begin position="52"/>
        <end position="152"/>
    </location>
</feature>
<feature type="region of interest" description="Disordered" evidence="4">
    <location>
        <begin position="1"/>
        <end position="56"/>
    </location>
</feature>
<feature type="region of interest" description="Disordered" evidence="4">
    <location>
        <begin position="206"/>
        <end position="241"/>
    </location>
</feature>
<feature type="region of interest" description="Disordered" evidence="4">
    <location>
        <begin position="255"/>
        <end position="374"/>
    </location>
</feature>
<feature type="region of interest" description="Disordered" evidence="4">
    <location>
        <begin position="387"/>
        <end position="430"/>
    </location>
</feature>
<feature type="compositionally biased region" description="Polar residues" evidence="4">
    <location>
        <begin position="15"/>
        <end position="32"/>
    </location>
</feature>
<feature type="compositionally biased region" description="Polar residues" evidence="4">
    <location>
        <begin position="216"/>
        <end position="227"/>
    </location>
</feature>
<feature type="compositionally biased region" description="Acidic residues" evidence="4">
    <location>
        <begin position="278"/>
        <end position="299"/>
    </location>
</feature>
<feature type="compositionally biased region" description="Polar residues" evidence="4">
    <location>
        <begin position="303"/>
        <end position="313"/>
    </location>
</feature>
<feature type="compositionally biased region" description="Acidic residues" evidence="4">
    <location>
        <begin position="327"/>
        <end position="344"/>
    </location>
</feature>
<feature type="compositionally biased region" description="Acidic residues" evidence="4">
    <location>
        <begin position="401"/>
        <end position="415"/>
    </location>
</feature>
<feature type="modified residue" description="Phosphoserine" evidence="2">
    <location>
        <position position="104"/>
    </location>
</feature>
<feature type="modified residue" description="Phosphotyrosine" evidence="1">
    <location>
        <position position="225"/>
    </location>
</feature>
<feature type="modified residue" description="Phosphotyrosine" evidence="1">
    <location>
        <position position="255"/>
    </location>
</feature>
<feature type="modified residue" description="Phosphotyrosine" evidence="1">
    <location>
        <position position="286"/>
    </location>
</feature>
<feature type="modified residue" description="Phosphotyrosine" evidence="1">
    <location>
        <position position="316"/>
    </location>
</feature>
<feature type="modified residue" description="Phosphotyrosine" evidence="2">
    <location>
        <position position="376"/>
    </location>
</feature>
<feature type="modified residue" description="Phosphotyrosine" evidence="2">
    <location>
        <position position="405"/>
    </location>
</feature>
<feature type="glycosylation site" description="N-linked (GlcNAc...) asparagine" evidence="3">
    <location>
        <position position="1"/>
    </location>
</feature>
<feature type="glycosylation site" description="N-linked (GlcNAc...) asparagine" evidence="3">
    <location>
        <position position="14"/>
    </location>
</feature>
<feature type="glycosylation site" description="N-linked (GlcNAc...) asparagine" evidence="3">
    <location>
        <position position="28"/>
    </location>
</feature>
<feature type="glycosylation site" description="N-linked (GlcNAc...) asparagine" evidence="3">
    <location>
        <position position="59"/>
    </location>
</feature>
<feature type="glycosylation site" description="N-linked (GlcNAc...) asparagine" evidence="3">
    <location>
        <position position="142"/>
    </location>
</feature>
<feature type="disulfide bond" evidence="1">
    <location>
        <begin position="10"/>
        <end position="49"/>
    </location>
</feature>
<feature type="non-terminal residue">
    <location>
        <position position="1"/>
    </location>
</feature>
<keyword id="KW-1064">Adaptive immunity</keyword>
<keyword id="KW-1003">Cell membrane</keyword>
<keyword id="KW-1015">Disulfide bond</keyword>
<keyword id="KW-0325">Glycoprotein</keyword>
<keyword id="KW-0391">Immunity</keyword>
<keyword id="KW-0393">Immunoglobulin domain</keyword>
<keyword id="KW-0472">Membrane</keyword>
<keyword id="KW-0597">Phosphoprotein</keyword>
<keyword id="KW-1185">Reference proteome</keyword>
<keyword id="KW-0677">Repeat</keyword>
<keyword id="KW-0812">Transmembrane</keyword>
<keyword id="KW-1133">Transmembrane helix</keyword>
<comment type="function">
    <text evidence="1 2">Functions as a coreceptor for the B-cell antigen receptor complex (BCR) on B-lymphocytes. Decreases the threshold for activation of downstream signaling pathways and for triggering B-cell responses to antigens (By similarity). Activates signaling pathways that lead to the activation of phosphatidylinositol 3-kinase and the mobilization of intracellular Ca(2+) stores. Is not required for early steps during B cell differentiation in the blood marrow. Required for normal differentiation of B-1 cells. Required for normal B cell differentiation and proliferation in response to antigen challenges. Required for normal levels of serum immunoglobulins, and for production of high-affinity antibodies in response to antigen challenge (By similarity).</text>
</comment>
<comment type="subunit">
    <text evidence="1">Interacts with CR2/CD21. Part of a complex composed of CD19, CR2/CD21, CD81 and IFITM1/CD225 in the membrane of mature B-cells. Interacts directly with CD81 (via the second extracellular domain); this interaction is initiated early during biosynthesis in the ER/pre-Golgi compartments and is essential for trafficking and compartmentalization of CD19 receptor on the cell surface of activated B cells. Interacts with VAV. Interacts with GRB2 and SOS when phosphorylated on Tyr-348 and/or Tyr-378. Interacts with PLCG2 when phosphorylated on Tyr-409. Interacts with LYN. Interacts (when tyrosine phosphorylated) with the regulatory p85 subunit of phosphatidylinositol 3-kinase (PIK3R1 or PIK3R2). Interacts with GRB2.</text>
</comment>
<comment type="subcellular location">
    <subcellularLocation>
        <location evidence="2">Cell membrane</location>
        <topology evidence="2">Single-pass type I membrane protein</topology>
    </subcellularLocation>
    <subcellularLocation>
        <location evidence="2">Membrane raft</location>
        <topology evidence="2">Single-pass type I membrane protein</topology>
    </subcellularLocation>
</comment>
<comment type="PTM">
    <text evidence="1 2">Phosphorylated on tyrosine following B-cell activation (By similarity). Phosphorylated on tyrosine residues by LYN (By similarity). Tyrosine residues are phosphorylated sequentially after activation of the B cell receptor. Phosphorylation of Tyr-405 is extremely rapid (By similarity).</text>
</comment>
<gene>
    <name type="primary">CD19</name>
</gene>
<proteinExistence type="evidence at transcript level"/>
<accession>P25917</accession>
<name>CD19_CAVPO</name>
<organism>
    <name type="scientific">Cavia porcellus</name>
    <name type="common">Guinea pig</name>
    <dbReference type="NCBI Taxonomy" id="10141"/>
    <lineage>
        <taxon>Eukaryota</taxon>
        <taxon>Metazoa</taxon>
        <taxon>Chordata</taxon>
        <taxon>Craniata</taxon>
        <taxon>Vertebrata</taxon>
        <taxon>Euteleostomi</taxon>
        <taxon>Mammalia</taxon>
        <taxon>Eutheria</taxon>
        <taxon>Euarchontoglires</taxon>
        <taxon>Glires</taxon>
        <taxon>Rodentia</taxon>
        <taxon>Hystricomorpha</taxon>
        <taxon>Caviidae</taxon>
        <taxon>Cavia</taxon>
    </lineage>
</organism>
<evidence type="ECO:0000250" key="1">
    <source>
        <dbReference type="UniProtKB" id="P15391"/>
    </source>
</evidence>
<evidence type="ECO:0000250" key="2">
    <source>
        <dbReference type="UniProtKB" id="P25918"/>
    </source>
</evidence>
<evidence type="ECO:0000255" key="3"/>
<evidence type="ECO:0000256" key="4">
    <source>
        <dbReference type="SAM" id="MobiDB-lite"/>
    </source>
</evidence>
<protein>
    <recommendedName>
        <fullName>B-lymphocyte antigen CD19</fullName>
    </recommendedName>
    <alternativeName>
        <fullName>Differentiation antigen CD19</fullName>
    </alternativeName>
    <cdAntigenName>CD19</cdAntigenName>
</protein>
<reference key="1">
    <citation type="journal article" date="1991" name="J. Immunol.">
        <title>Structure and domain organization of the CD19 antigen of human, mouse, and guinea pig B lymphocytes. Conservation of the extensive cytoplasmic domain.</title>
        <authorList>
            <person name="Zhou L.J."/>
            <person name="Ord D.C."/>
            <person name="Hughes A.L."/>
            <person name="Tedder T.F."/>
        </authorList>
    </citation>
    <scope>NUCLEOTIDE SEQUENCE [MRNA]</scope>
</reference>
<dbReference type="EMBL" id="M62543">
    <property type="protein sequence ID" value="AAA51529.1"/>
    <property type="molecule type" value="mRNA"/>
</dbReference>
<dbReference type="PIR" id="I48142">
    <property type="entry name" value="I48142"/>
</dbReference>
<dbReference type="SMR" id="P25917"/>
<dbReference type="FunCoup" id="P25917">
    <property type="interactions" value="463"/>
</dbReference>
<dbReference type="STRING" id="10141.ENSCPOP00000001807"/>
<dbReference type="GlyCosmos" id="P25917">
    <property type="glycosylation" value="5 sites, No reported glycans"/>
</dbReference>
<dbReference type="eggNOG" id="ENOG502STG8">
    <property type="taxonomic scope" value="Eukaryota"/>
</dbReference>
<dbReference type="InParanoid" id="P25917"/>
<dbReference type="Proteomes" id="UP000005447">
    <property type="component" value="Unassembled WGS sequence"/>
</dbReference>
<dbReference type="GO" id="GO:0009897">
    <property type="term" value="C:external side of plasma membrane"/>
    <property type="evidence" value="ECO:0007669"/>
    <property type="project" value="TreeGrafter"/>
</dbReference>
<dbReference type="GO" id="GO:0045121">
    <property type="term" value="C:membrane raft"/>
    <property type="evidence" value="ECO:0007669"/>
    <property type="project" value="UniProtKB-SubCell"/>
</dbReference>
<dbReference type="GO" id="GO:0005886">
    <property type="term" value="C:plasma membrane"/>
    <property type="evidence" value="ECO:0000250"/>
    <property type="project" value="UniProtKB"/>
</dbReference>
<dbReference type="GO" id="GO:0050851">
    <property type="term" value="P:antigen receptor-mediated signaling pathway"/>
    <property type="evidence" value="ECO:0000250"/>
    <property type="project" value="UniProtKB"/>
</dbReference>
<dbReference type="GO" id="GO:0019724">
    <property type="term" value="P:B cell mediated immunity"/>
    <property type="evidence" value="ECO:0000250"/>
    <property type="project" value="UniProtKB"/>
</dbReference>
<dbReference type="GO" id="GO:0002322">
    <property type="term" value="P:B cell proliferation involved in immune response"/>
    <property type="evidence" value="ECO:0000250"/>
    <property type="project" value="UniProtKB"/>
</dbReference>
<dbReference type="GO" id="GO:0050853">
    <property type="term" value="P:B cell receptor signaling pathway"/>
    <property type="evidence" value="ECO:0000250"/>
    <property type="project" value="UniProtKB"/>
</dbReference>
<dbReference type="GO" id="GO:0001923">
    <property type="term" value="P:B-1 B cell differentiation"/>
    <property type="evidence" value="ECO:0000250"/>
    <property type="project" value="UniProtKB"/>
</dbReference>
<dbReference type="GO" id="GO:0016064">
    <property type="term" value="P:immunoglobulin mediated immune response"/>
    <property type="evidence" value="ECO:0000250"/>
    <property type="project" value="UniProtKB"/>
</dbReference>
<dbReference type="GO" id="GO:0051897">
    <property type="term" value="P:positive regulation of phosphatidylinositol 3-kinase/protein kinase B signal transduction"/>
    <property type="evidence" value="ECO:0000250"/>
    <property type="project" value="UniProtKB"/>
</dbReference>
<dbReference type="GO" id="GO:0051281">
    <property type="term" value="P:positive regulation of release of sequestered calcium ion into cytosol"/>
    <property type="evidence" value="ECO:0000250"/>
    <property type="project" value="UniProtKB"/>
</dbReference>
<dbReference type="GO" id="GO:0050864">
    <property type="term" value="P:regulation of B cell activation"/>
    <property type="evidence" value="ECO:0000250"/>
    <property type="project" value="UniProtKB"/>
</dbReference>
<dbReference type="GO" id="GO:0050855">
    <property type="term" value="P:regulation of B cell receptor signaling pathway"/>
    <property type="evidence" value="ECO:0000250"/>
    <property type="project" value="UniProtKB"/>
</dbReference>
<dbReference type="InterPro" id="IPR042341">
    <property type="entry name" value="CD19"/>
</dbReference>
<dbReference type="InterPro" id="IPR007110">
    <property type="entry name" value="Ig-like_dom"/>
</dbReference>
<dbReference type="InterPro" id="IPR036179">
    <property type="entry name" value="Ig-like_dom_sf"/>
</dbReference>
<dbReference type="InterPro" id="IPR003599">
    <property type="entry name" value="Ig_sub"/>
</dbReference>
<dbReference type="PANTHER" id="PTHR16674">
    <property type="entry name" value="B-LYMPHOCYTE ANTIGEN CD19"/>
    <property type="match status" value="1"/>
</dbReference>
<dbReference type="PANTHER" id="PTHR16674:SF2">
    <property type="entry name" value="B-LYMPHOCYTE ANTIGEN CD19"/>
    <property type="match status" value="1"/>
</dbReference>
<dbReference type="SMART" id="SM00409">
    <property type="entry name" value="IG"/>
    <property type="match status" value="1"/>
</dbReference>
<dbReference type="SUPFAM" id="SSF48726">
    <property type="entry name" value="Immunoglobulin"/>
    <property type="match status" value="1"/>
</dbReference>
<dbReference type="PROSITE" id="PS50835">
    <property type="entry name" value="IG_LIKE"/>
    <property type="match status" value="1"/>
</dbReference>
<sequence>NSSDLGDFSCGPGNGSSEGPTPSSQHPNSSQLYVWDKRDSPSWEPEPVCAPPRGSLNENLTQDLTVALGSTLWLSCGVPPAHVTRGPVSWTQVHPKKPDSTLLSLYLREKPPVQEMWVLGPVLSLSQVTVQAAGTYYCLRGNLTTEIHMKVTARQAVWHWLLRSGGWKVPAVSLVYLIFCLGSLVVFLQIRKALVLRRKRKRMTDPNRRFFKVTPPSGNGTPNQYGNVLSLPTPGSSTGRTQRWAAALGGTIQSYGNSRSDVQETGAMGSRSPTTAGIEEEEGEGYEEPDSEEGSEFYENDSNRGQDQLSQDASGYENPEDGPLGSADEDSFSNESYENADEELAQPVARTTDFLSPHGSAWDPSREATSLGSQSYEDMRGILYAAPQLRSLQPGPHHEEDADSYENMDNPDEPEPAWGGGGHMGIWSTR</sequence>